<accession>Q9Z765</accession>
<accession>Q9JQE5</accession>
<feature type="chain" id="PRO_0000109583" description="Protein translocase subunit SecA">
    <location>
        <begin position="1"/>
        <end position="970"/>
    </location>
</feature>
<feature type="binding site" evidence="1">
    <location>
        <position position="99"/>
    </location>
    <ligand>
        <name>ATP</name>
        <dbReference type="ChEBI" id="CHEBI:30616"/>
    </ligand>
</feature>
<feature type="binding site" evidence="1">
    <location>
        <begin position="117"/>
        <end position="121"/>
    </location>
    <ligand>
        <name>ATP</name>
        <dbReference type="ChEBI" id="CHEBI:30616"/>
    </ligand>
</feature>
<feature type="binding site" evidence="1">
    <location>
        <position position="631"/>
    </location>
    <ligand>
        <name>ATP</name>
        <dbReference type="ChEBI" id="CHEBI:30616"/>
    </ligand>
</feature>
<keyword id="KW-0067">ATP-binding</keyword>
<keyword id="KW-0997">Cell inner membrane</keyword>
<keyword id="KW-1003">Cell membrane</keyword>
<keyword id="KW-0963">Cytoplasm</keyword>
<keyword id="KW-0472">Membrane</keyword>
<keyword id="KW-0547">Nucleotide-binding</keyword>
<keyword id="KW-0653">Protein transport</keyword>
<keyword id="KW-1278">Translocase</keyword>
<keyword id="KW-0811">Translocation</keyword>
<keyword id="KW-0813">Transport</keyword>
<proteinExistence type="inferred from homology"/>
<evidence type="ECO:0000255" key="1">
    <source>
        <dbReference type="HAMAP-Rule" id="MF_01382"/>
    </source>
</evidence>
<protein>
    <recommendedName>
        <fullName evidence="1">Protein translocase subunit SecA</fullName>
        <ecNumber evidence="1">7.4.2.8</ecNumber>
    </recommendedName>
</protein>
<gene>
    <name evidence="1" type="primary">secA</name>
    <name type="ordered locus">CPn_0841</name>
    <name type="ordered locus">CP_1028</name>
    <name type="ordered locus">CpB0870</name>
</gene>
<organism>
    <name type="scientific">Chlamydia pneumoniae</name>
    <name type="common">Chlamydophila pneumoniae</name>
    <dbReference type="NCBI Taxonomy" id="83558"/>
    <lineage>
        <taxon>Bacteria</taxon>
        <taxon>Pseudomonadati</taxon>
        <taxon>Chlamydiota</taxon>
        <taxon>Chlamydiia</taxon>
        <taxon>Chlamydiales</taxon>
        <taxon>Chlamydiaceae</taxon>
        <taxon>Chlamydia/Chlamydophila group</taxon>
        <taxon>Chlamydia</taxon>
    </lineage>
</organism>
<comment type="function">
    <text evidence="1">Part of the Sec protein translocase complex. Interacts with the SecYEG preprotein conducting channel. Has a central role in coupling the hydrolysis of ATP to the transfer of proteins into and across the cell membrane, serving as an ATP-driven molecular motor driving the stepwise translocation of polypeptide chains across the membrane.</text>
</comment>
<comment type="catalytic activity">
    <reaction evidence="1">
        <text>ATP + H2O + cellular proteinSide 1 = ADP + phosphate + cellular proteinSide 2.</text>
        <dbReference type="EC" id="7.4.2.8"/>
    </reaction>
</comment>
<comment type="subunit">
    <text evidence="1">Monomer and homodimer. Part of the essential Sec protein translocation apparatus which comprises SecA, SecYEG and auxiliary proteins SecDF. Other proteins may also be involved.</text>
</comment>
<comment type="subcellular location">
    <subcellularLocation>
        <location evidence="1">Cell inner membrane</location>
        <topology evidence="1">Peripheral membrane protein</topology>
        <orientation evidence="1">Cytoplasmic side</orientation>
    </subcellularLocation>
    <subcellularLocation>
        <location evidence="1">Cytoplasm</location>
    </subcellularLocation>
    <text evidence="1">Distribution is 50-50.</text>
</comment>
<comment type="similarity">
    <text evidence="1">Belongs to the SecA family.</text>
</comment>
<sequence>MLGFLKRFFGSSQERILKKFQKLVDKVNIYDEMLTPLSDDELRNKTAELKQRYQNGESLDSMLPEAYGVVKNVCRRLAGTPVEVSGYHQRWDMVPYDVQILGAIAMHKGFITEMQTGEGKTLTAVMPLYLNALTGKPVHLVTVNDYLAQRDCEWVGSVLRWLGLTTGVLVSGTLLEKRKKIYQCDVVYGTASEFGFDYLRDNSIATRLEEQVGRGYYFAIIDEVDSILIDEARTPLIISGPGEKHNPVYFELKEKVASLVYLQKELCSRIALEARRGLDSFLDVDILPKDKKVLEGISEFCRSLWLVSKGMPLNRVLRRVREHPDLRAMIDKWDVYYHAEQNKEESLERLSELYIIVDEHNNDFELTDKGMQQWVEYAGGSTEEFVMMDMGHEYALIENDETLSPADKINKKIAISEEDTLRKARAHGLRQLLRAQLLMERDVDYIVRDDQIVIIDEHTGRPQPGRRFSEGLHQAIEAKEHVTIRKESQTLATVTLQNFFRLYEKLAGMTGTAITESREFKEIYNLYVLQVPTFKPCLRIDHNDEFYMTEREKYHAIVNEIATIHGKGNPILVGTESVEVSEKLSRILRQNRIEHTVLNAKNHAQEAEIIAGAGKLGAVTVATNMAGRGTDIKLDNEAVIVGGLHVIGTTRHQSRRIDRQLRGRCARLGDPGAAKFFLSFEDRLMRLFASPKLNTLIRHFRPPEGEAMSDPMFNRLIETAQKRVEGRNYTIRKHTLEYDDVMNKQRQAIYAFRHDVLHAESVFDLAKEILCHVSLMVASLVMSDRQFKGWTLPNLEEWITSSFPIALNIEELRQLKDTDSIAEKIAAELIQEFQVRFDHMVEGLSKAGGEELDASAICRDVVRSVMVMHIDEQWRIHLVDMDLLRSEVGLRTVGQKDPLLEFKHESFLLFESLIRDIRITIARHLFRLELTVEPNPRVNNVIPTVATSFHNNVNYGPLELTVVTDSEDQD</sequence>
<dbReference type="EC" id="7.4.2.8" evidence="1"/>
<dbReference type="EMBL" id="AE001363">
    <property type="protein sequence ID" value="AAD18979.1"/>
    <property type="molecule type" value="Genomic_DNA"/>
</dbReference>
<dbReference type="EMBL" id="AE002161">
    <property type="protein sequence ID" value="AAF38804.1"/>
    <property type="molecule type" value="Genomic_DNA"/>
</dbReference>
<dbReference type="EMBL" id="BA000008">
    <property type="protein sequence ID" value="BAA99049.1"/>
    <property type="molecule type" value="Genomic_DNA"/>
</dbReference>
<dbReference type="EMBL" id="AE009440">
    <property type="protein sequence ID" value="AAP98799.1"/>
    <property type="molecule type" value="Genomic_DNA"/>
</dbReference>
<dbReference type="PIR" id="A72028">
    <property type="entry name" value="A72028"/>
</dbReference>
<dbReference type="PIR" id="G86595">
    <property type="entry name" value="G86595"/>
</dbReference>
<dbReference type="RefSeq" id="NP_225036.1">
    <property type="nucleotide sequence ID" value="NC_000922.1"/>
</dbReference>
<dbReference type="RefSeq" id="WP_010883478.1">
    <property type="nucleotide sequence ID" value="NZ_LN847257.1"/>
</dbReference>
<dbReference type="SMR" id="Q9Z765"/>
<dbReference type="STRING" id="406984.CPK_ORF00248"/>
<dbReference type="GeneID" id="45050895"/>
<dbReference type="KEGG" id="cpa:CP_1028"/>
<dbReference type="KEGG" id="cpj:secA_2"/>
<dbReference type="KEGG" id="cpn:CPn_0841"/>
<dbReference type="KEGG" id="cpt:CpB0870"/>
<dbReference type="PATRIC" id="fig|115713.3.peg.921"/>
<dbReference type="eggNOG" id="COG0653">
    <property type="taxonomic scope" value="Bacteria"/>
</dbReference>
<dbReference type="HOGENOM" id="CLU_005314_3_0_0"/>
<dbReference type="OMA" id="MVHYDVQ"/>
<dbReference type="OrthoDB" id="9805579at2"/>
<dbReference type="Proteomes" id="UP000000583">
    <property type="component" value="Chromosome"/>
</dbReference>
<dbReference type="Proteomes" id="UP000000801">
    <property type="component" value="Chromosome"/>
</dbReference>
<dbReference type="GO" id="GO:0031522">
    <property type="term" value="C:cell envelope Sec protein transport complex"/>
    <property type="evidence" value="ECO:0007669"/>
    <property type="project" value="TreeGrafter"/>
</dbReference>
<dbReference type="GO" id="GO:0005829">
    <property type="term" value="C:cytosol"/>
    <property type="evidence" value="ECO:0007669"/>
    <property type="project" value="TreeGrafter"/>
</dbReference>
<dbReference type="GO" id="GO:0005886">
    <property type="term" value="C:plasma membrane"/>
    <property type="evidence" value="ECO:0007669"/>
    <property type="project" value="UniProtKB-SubCell"/>
</dbReference>
<dbReference type="GO" id="GO:0005524">
    <property type="term" value="F:ATP binding"/>
    <property type="evidence" value="ECO:0007669"/>
    <property type="project" value="UniProtKB-UniRule"/>
</dbReference>
<dbReference type="GO" id="GO:0008564">
    <property type="term" value="F:protein-exporting ATPase activity"/>
    <property type="evidence" value="ECO:0007669"/>
    <property type="project" value="UniProtKB-EC"/>
</dbReference>
<dbReference type="GO" id="GO:0065002">
    <property type="term" value="P:intracellular protein transmembrane transport"/>
    <property type="evidence" value="ECO:0007669"/>
    <property type="project" value="UniProtKB-UniRule"/>
</dbReference>
<dbReference type="GO" id="GO:0017038">
    <property type="term" value="P:protein import"/>
    <property type="evidence" value="ECO:0007669"/>
    <property type="project" value="InterPro"/>
</dbReference>
<dbReference type="GO" id="GO:0006605">
    <property type="term" value="P:protein targeting"/>
    <property type="evidence" value="ECO:0007669"/>
    <property type="project" value="UniProtKB-UniRule"/>
</dbReference>
<dbReference type="GO" id="GO:0043952">
    <property type="term" value="P:protein transport by the Sec complex"/>
    <property type="evidence" value="ECO:0007669"/>
    <property type="project" value="TreeGrafter"/>
</dbReference>
<dbReference type="CDD" id="cd17928">
    <property type="entry name" value="DEXDc_SecA"/>
    <property type="match status" value="1"/>
</dbReference>
<dbReference type="CDD" id="cd18803">
    <property type="entry name" value="SF2_C_secA"/>
    <property type="match status" value="1"/>
</dbReference>
<dbReference type="FunFam" id="3.40.50.300:FF:000429">
    <property type="entry name" value="Preprotein translocase subunit SecA"/>
    <property type="match status" value="1"/>
</dbReference>
<dbReference type="FunFam" id="3.40.50.300:FF:000787">
    <property type="entry name" value="Protein translocase subunit SecA"/>
    <property type="match status" value="1"/>
</dbReference>
<dbReference type="Gene3D" id="1.10.3060.10">
    <property type="entry name" value="Helical scaffold and wing domains of SecA"/>
    <property type="match status" value="1"/>
</dbReference>
<dbReference type="Gene3D" id="3.40.50.300">
    <property type="entry name" value="P-loop containing nucleotide triphosphate hydrolases"/>
    <property type="match status" value="3"/>
</dbReference>
<dbReference type="Gene3D" id="3.90.1440.10">
    <property type="entry name" value="SecA, preprotein cross-linking domain"/>
    <property type="match status" value="1"/>
</dbReference>
<dbReference type="HAMAP" id="MF_01382">
    <property type="entry name" value="SecA"/>
    <property type="match status" value="1"/>
</dbReference>
<dbReference type="InterPro" id="IPR014001">
    <property type="entry name" value="Helicase_ATP-bd"/>
</dbReference>
<dbReference type="InterPro" id="IPR001650">
    <property type="entry name" value="Helicase_C-like"/>
</dbReference>
<dbReference type="InterPro" id="IPR027417">
    <property type="entry name" value="P-loop_NTPase"/>
</dbReference>
<dbReference type="InterPro" id="IPR000185">
    <property type="entry name" value="SecA"/>
</dbReference>
<dbReference type="InterPro" id="IPR020937">
    <property type="entry name" value="SecA_CS"/>
</dbReference>
<dbReference type="InterPro" id="IPR011115">
    <property type="entry name" value="SecA_DEAD"/>
</dbReference>
<dbReference type="InterPro" id="IPR014018">
    <property type="entry name" value="SecA_motor_DEAD"/>
</dbReference>
<dbReference type="InterPro" id="IPR011130">
    <property type="entry name" value="SecA_preprotein_X-link_dom"/>
</dbReference>
<dbReference type="InterPro" id="IPR044722">
    <property type="entry name" value="SecA_SF2_C"/>
</dbReference>
<dbReference type="InterPro" id="IPR011116">
    <property type="entry name" value="SecA_Wing/Scaffold"/>
</dbReference>
<dbReference type="InterPro" id="IPR036266">
    <property type="entry name" value="SecA_Wing/Scaffold_sf"/>
</dbReference>
<dbReference type="InterPro" id="IPR036670">
    <property type="entry name" value="SecA_X-link_sf"/>
</dbReference>
<dbReference type="NCBIfam" id="TIGR00963">
    <property type="entry name" value="secA"/>
    <property type="match status" value="1"/>
</dbReference>
<dbReference type="PANTHER" id="PTHR30612:SF0">
    <property type="entry name" value="CHLOROPLAST PROTEIN-TRANSPORTING ATPASE"/>
    <property type="match status" value="1"/>
</dbReference>
<dbReference type="PANTHER" id="PTHR30612">
    <property type="entry name" value="SECA INNER MEMBRANE COMPONENT OF SEC PROTEIN SECRETION SYSTEM"/>
    <property type="match status" value="1"/>
</dbReference>
<dbReference type="Pfam" id="PF21090">
    <property type="entry name" value="P-loop_SecA"/>
    <property type="match status" value="2"/>
</dbReference>
<dbReference type="Pfam" id="PF07517">
    <property type="entry name" value="SecA_DEAD"/>
    <property type="match status" value="1"/>
</dbReference>
<dbReference type="Pfam" id="PF01043">
    <property type="entry name" value="SecA_PP_bind"/>
    <property type="match status" value="1"/>
</dbReference>
<dbReference type="Pfam" id="PF07516">
    <property type="entry name" value="SecA_SW"/>
    <property type="match status" value="1"/>
</dbReference>
<dbReference type="PRINTS" id="PR00906">
    <property type="entry name" value="SECA"/>
</dbReference>
<dbReference type="SMART" id="SM00957">
    <property type="entry name" value="SecA_DEAD"/>
    <property type="match status" value="1"/>
</dbReference>
<dbReference type="SMART" id="SM00958">
    <property type="entry name" value="SecA_PP_bind"/>
    <property type="match status" value="1"/>
</dbReference>
<dbReference type="SUPFAM" id="SSF81886">
    <property type="entry name" value="Helical scaffold and wing domains of SecA"/>
    <property type="match status" value="1"/>
</dbReference>
<dbReference type="SUPFAM" id="SSF52540">
    <property type="entry name" value="P-loop containing nucleoside triphosphate hydrolases"/>
    <property type="match status" value="2"/>
</dbReference>
<dbReference type="SUPFAM" id="SSF81767">
    <property type="entry name" value="Pre-protein crosslinking domain of SecA"/>
    <property type="match status" value="1"/>
</dbReference>
<dbReference type="PROSITE" id="PS01312">
    <property type="entry name" value="SECA"/>
    <property type="match status" value="1"/>
</dbReference>
<dbReference type="PROSITE" id="PS51196">
    <property type="entry name" value="SECA_MOTOR_DEAD"/>
    <property type="match status" value="1"/>
</dbReference>
<reference key="1">
    <citation type="journal article" date="1999" name="Nat. Genet.">
        <title>Comparative genomes of Chlamydia pneumoniae and C. trachomatis.</title>
        <authorList>
            <person name="Kalman S."/>
            <person name="Mitchell W.P."/>
            <person name="Marathe R."/>
            <person name="Lammel C.J."/>
            <person name="Fan J."/>
            <person name="Hyman R.W."/>
            <person name="Olinger L."/>
            <person name="Grimwood J."/>
            <person name="Davis R.W."/>
            <person name="Stephens R.S."/>
        </authorList>
    </citation>
    <scope>NUCLEOTIDE SEQUENCE [LARGE SCALE GENOMIC DNA]</scope>
    <source>
        <strain>CWL029</strain>
    </source>
</reference>
<reference key="2">
    <citation type="journal article" date="2000" name="Nucleic Acids Res.">
        <title>Genome sequences of Chlamydia trachomatis MoPn and Chlamydia pneumoniae AR39.</title>
        <authorList>
            <person name="Read T.D."/>
            <person name="Brunham R.C."/>
            <person name="Shen C."/>
            <person name="Gill S.R."/>
            <person name="Heidelberg J.F."/>
            <person name="White O."/>
            <person name="Hickey E.K."/>
            <person name="Peterson J.D."/>
            <person name="Utterback T.R."/>
            <person name="Berry K.J."/>
            <person name="Bass S."/>
            <person name="Linher K.D."/>
            <person name="Weidman J.F."/>
            <person name="Khouri H.M."/>
            <person name="Craven B."/>
            <person name="Bowman C."/>
            <person name="Dodson R.J."/>
            <person name="Gwinn M.L."/>
            <person name="Nelson W.C."/>
            <person name="DeBoy R.T."/>
            <person name="Kolonay J.F."/>
            <person name="McClarty G."/>
            <person name="Salzberg S.L."/>
            <person name="Eisen J.A."/>
            <person name="Fraser C.M."/>
        </authorList>
    </citation>
    <scope>NUCLEOTIDE SEQUENCE [LARGE SCALE GENOMIC DNA]</scope>
    <source>
        <strain>AR39</strain>
    </source>
</reference>
<reference key="3">
    <citation type="journal article" date="2000" name="Nucleic Acids Res.">
        <title>Comparison of whole genome sequences of Chlamydia pneumoniae J138 from Japan and CWL029 from USA.</title>
        <authorList>
            <person name="Shirai M."/>
            <person name="Hirakawa H."/>
            <person name="Kimoto M."/>
            <person name="Tabuchi M."/>
            <person name="Kishi F."/>
            <person name="Ouchi K."/>
            <person name="Shiba T."/>
            <person name="Ishii K."/>
            <person name="Hattori M."/>
            <person name="Kuhara S."/>
            <person name="Nakazawa T."/>
        </authorList>
    </citation>
    <scope>NUCLEOTIDE SEQUENCE [LARGE SCALE GENOMIC DNA]</scope>
    <source>
        <strain>J138</strain>
    </source>
</reference>
<reference key="4">
    <citation type="submission" date="2002-05" db="EMBL/GenBank/DDBJ databases">
        <title>The genome sequence of Chlamydia pneumoniae TW183 and comparison with other Chlamydia strains based on whole genome sequence analysis.</title>
        <authorList>
            <person name="Geng M.M."/>
            <person name="Schuhmacher A."/>
            <person name="Muehldorfer I."/>
            <person name="Bensch K.W."/>
            <person name="Schaefer K.P."/>
            <person name="Schneider S."/>
            <person name="Pohl T."/>
            <person name="Essig A."/>
            <person name="Marre R."/>
            <person name="Melchers K."/>
        </authorList>
    </citation>
    <scope>NUCLEOTIDE SEQUENCE [LARGE SCALE GENOMIC DNA]</scope>
    <source>
        <strain>TW-183</strain>
    </source>
</reference>
<name>SECA_CHLPN</name>